<comment type="function">
    <text evidence="1">Cell division protein that is required for growth during stress conditions. May be involved in protecting or stabilizing the divisomal assembly under conditions of stress.</text>
</comment>
<comment type="subcellular location">
    <subcellularLocation>
        <location evidence="1">Periplasm</location>
    </subcellularLocation>
    <text evidence="1">Localizes to the division septum.</text>
</comment>
<comment type="PTM">
    <text>Predicted to be exported by the Tat system. The position of the signal peptide cleavage has not been experimentally proven.</text>
</comment>
<comment type="similarity">
    <text evidence="1">Belongs to the FtsP family.</text>
</comment>
<reference key="1">
    <citation type="journal article" date="2008" name="J. Bacteriol.">
        <title>Complete genome sequence of uropathogenic Proteus mirabilis, a master of both adherence and motility.</title>
        <authorList>
            <person name="Pearson M.M."/>
            <person name="Sebaihia M."/>
            <person name="Churcher C."/>
            <person name="Quail M.A."/>
            <person name="Seshasayee A.S."/>
            <person name="Luscombe N.M."/>
            <person name="Abdellah Z."/>
            <person name="Arrosmith C."/>
            <person name="Atkin B."/>
            <person name="Chillingworth T."/>
            <person name="Hauser H."/>
            <person name="Jagels K."/>
            <person name="Moule S."/>
            <person name="Mungall K."/>
            <person name="Norbertczak H."/>
            <person name="Rabbinowitsch E."/>
            <person name="Walker D."/>
            <person name="Whithead S."/>
            <person name="Thomson N.R."/>
            <person name="Rather P.N."/>
            <person name="Parkhill J."/>
            <person name="Mobley H.L.T."/>
        </authorList>
    </citation>
    <scope>NUCLEOTIDE SEQUENCE [LARGE SCALE GENOMIC DNA]</scope>
    <source>
        <strain>HI4320</strain>
    </source>
</reference>
<proteinExistence type="inferred from homology"/>
<evidence type="ECO:0000255" key="1">
    <source>
        <dbReference type="HAMAP-Rule" id="MF_00915"/>
    </source>
</evidence>
<keyword id="KW-0131">Cell cycle</keyword>
<keyword id="KW-0132">Cell division</keyword>
<keyword id="KW-0574">Periplasm</keyword>
<keyword id="KW-1185">Reference proteome</keyword>
<keyword id="KW-0732">Signal</keyword>
<feature type="signal peptide" description="Tat-type signal" evidence="1">
    <location>
        <begin position="1"/>
        <end position="27"/>
    </location>
</feature>
<feature type="chain" id="PRO_0000416013" description="Cell division protein FtsP">
    <location>
        <begin position="28"/>
        <end position="473"/>
    </location>
</feature>
<name>FTSP_PROMH</name>
<protein>
    <recommendedName>
        <fullName evidence="1">Cell division protein FtsP</fullName>
    </recommendedName>
</protein>
<organism>
    <name type="scientific">Proteus mirabilis (strain HI4320)</name>
    <dbReference type="NCBI Taxonomy" id="529507"/>
    <lineage>
        <taxon>Bacteria</taxon>
        <taxon>Pseudomonadati</taxon>
        <taxon>Pseudomonadota</taxon>
        <taxon>Gammaproteobacteria</taxon>
        <taxon>Enterobacterales</taxon>
        <taxon>Morganellaceae</taxon>
        <taxon>Proteus</taxon>
    </lineage>
</organism>
<sequence>MSFSRRQFLQASGLAVCLGSLSSSVRAGSVSDRKLPIPPLLESRNGQPLFVTLQKVHWAFDGTQKTEVWGINGSMPGPTIKVKSGDDVKLIYSNRLNEPVSMTVSGLLVPGTQIGGAARMMSPGAYWSPVLPIRQKAATCWYHANTPFKMAPHVYNGLVGMWIVEDEESKSLPLPKHYGVNDFPIILQDKRLDNFGTPQYDKEAATEGFYGDTLLVNGCEDPYIEVSRGWIRLRLVNASNARRYELSANDGRSLYLIASDQGLLTSPVELKSIPMAPGERREILIDLSEGEEVTITAGQSAGFMDRLRGIFEPSNLLRNTNVLTIKPTGLMSLVTDKVPQQLVVDDTQITTSIQPRTIQLQNSPPGINNARWELSRIDLVGKQNGWERWLVTVETPQPFHIEGARFKVINHDGQKPAPADFGWKDTVWIEKQSELLVELKQPSYSHFPFVYYSQILENADKGIAGQMEITPSE</sequence>
<accession>B4F2J0</accession>
<gene>
    <name evidence="1" type="primary">ftsP</name>
    <name type="ordered locus">PMI2342</name>
</gene>
<dbReference type="EMBL" id="AM942759">
    <property type="protein sequence ID" value="CAR44627.1"/>
    <property type="molecule type" value="Genomic_DNA"/>
</dbReference>
<dbReference type="RefSeq" id="WP_004250218.1">
    <property type="nucleotide sequence ID" value="NC_010554.1"/>
</dbReference>
<dbReference type="SMR" id="B4F2J0"/>
<dbReference type="EnsemblBacteria" id="CAR44627">
    <property type="protein sequence ID" value="CAR44627"/>
    <property type="gene ID" value="PMI2342"/>
</dbReference>
<dbReference type="GeneID" id="6801753"/>
<dbReference type="KEGG" id="pmr:PMI2342"/>
<dbReference type="PATRIC" id="fig|529507.6.peg.2291"/>
<dbReference type="eggNOG" id="COG2132">
    <property type="taxonomic scope" value="Bacteria"/>
</dbReference>
<dbReference type="HOGENOM" id="CLU_009100_2_4_6"/>
<dbReference type="Proteomes" id="UP000008319">
    <property type="component" value="Chromosome"/>
</dbReference>
<dbReference type="GO" id="GO:0032153">
    <property type="term" value="C:cell division site"/>
    <property type="evidence" value="ECO:0007669"/>
    <property type="project" value="UniProtKB-UniRule"/>
</dbReference>
<dbReference type="GO" id="GO:0030288">
    <property type="term" value="C:outer membrane-bounded periplasmic space"/>
    <property type="evidence" value="ECO:0007669"/>
    <property type="project" value="UniProtKB-UniRule"/>
</dbReference>
<dbReference type="GO" id="GO:0005507">
    <property type="term" value="F:copper ion binding"/>
    <property type="evidence" value="ECO:0007669"/>
    <property type="project" value="InterPro"/>
</dbReference>
<dbReference type="GO" id="GO:0016491">
    <property type="term" value="F:oxidoreductase activity"/>
    <property type="evidence" value="ECO:0007669"/>
    <property type="project" value="InterPro"/>
</dbReference>
<dbReference type="GO" id="GO:0043093">
    <property type="term" value="P:FtsZ-dependent cytokinesis"/>
    <property type="evidence" value="ECO:0007669"/>
    <property type="project" value="UniProtKB-UniRule"/>
</dbReference>
<dbReference type="CDD" id="cd13867">
    <property type="entry name" value="CuRO_2_CueO_FtsP"/>
    <property type="match status" value="1"/>
</dbReference>
<dbReference type="CDD" id="cd13890">
    <property type="entry name" value="CuRO_3_CueO_FtsP"/>
    <property type="match status" value="1"/>
</dbReference>
<dbReference type="Gene3D" id="2.60.40.420">
    <property type="entry name" value="Cupredoxins - blue copper proteins"/>
    <property type="match status" value="3"/>
</dbReference>
<dbReference type="HAMAP" id="MF_00915">
    <property type="entry name" value="FtsP"/>
    <property type="match status" value="1"/>
</dbReference>
<dbReference type="InterPro" id="IPR011707">
    <property type="entry name" value="Cu-oxidase-like_N"/>
</dbReference>
<dbReference type="InterPro" id="IPR011706">
    <property type="entry name" value="Cu-oxidase_C"/>
</dbReference>
<dbReference type="InterPro" id="IPR045087">
    <property type="entry name" value="Cu-oxidase_fam"/>
</dbReference>
<dbReference type="InterPro" id="IPR008972">
    <property type="entry name" value="Cupredoxin"/>
</dbReference>
<dbReference type="InterPro" id="IPR026589">
    <property type="entry name" value="FtsP"/>
</dbReference>
<dbReference type="InterPro" id="IPR006311">
    <property type="entry name" value="TAT_signal"/>
</dbReference>
<dbReference type="InterPro" id="IPR019546">
    <property type="entry name" value="TAT_signal_bac_arc"/>
</dbReference>
<dbReference type="NCBIfam" id="NF008135">
    <property type="entry name" value="PRK10883.1"/>
    <property type="match status" value="1"/>
</dbReference>
<dbReference type="NCBIfam" id="TIGR01409">
    <property type="entry name" value="TAT_signal_seq"/>
    <property type="match status" value="1"/>
</dbReference>
<dbReference type="PANTHER" id="PTHR48267:SF1">
    <property type="entry name" value="BILIRUBIN OXIDASE"/>
    <property type="match status" value="1"/>
</dbReference>
<dbReference type="PANTHER" id="PTHR48267">
    <property type="entry name" value="CUPREDOXIN SUPERFAMILY PROTEIN"/>
    <property type="match status" value="1"/>
</dbReference>
<dbReference type="Pfam" id="PF07731">
    <property type="entry name" value="Cu-oxidase_2"/>
    <property type="match status" value="1"/>
</dbReference>
<dbReference type="Pfam" id="PF07732">
    <property type="entry name" value="Cu-oxidase_3"/>
    <property type="match status" value="1"/>
</dbReference>
<dbReference type="SUPFAM" id="SSF49503">
    <property type="entry name" value="Cupredoxins"/>
    <property type="match status" value="3"/>
</dbReference>
<dbReference type="PROSITE" id="PS51318">
    <property type="entry name" value="TAT"/>
    <property type="match status" value="1"/>
</dbReference>